<feature type="chain" id="PRO_1000190646" description="Dihydroxy-acid dehydratase">
    <location>
        <begin position="1"/>
        <end position="557"/>
    </location>
</feature>
<feature type="active site" description="Proton acceptor" evidence="1">
    <location>
        <position position="468"/>
    </location>
</feature>
<feature type="binding site" evidence="1">
    <location>
        <position position="78"/>
    </location>
    <ligand>
        <name>Mg(2+)</name>
        <dbReference type="ChEBI" id="CHEBI:18420"/>
    </ligand>
</feature>
<feature type="binding site" evidence="1">
    <location>
        <position position="119"/>
    </location>
    <ligand>
        <name>[2Fe-2S] cluster</name>
        <dbReference type="ChEBI" id="CHEBI:190135"/>
    </ligand>
</feature>
<feature type="binding site" evidence="1">
    <location>
        <position position="120"/>
    </location>
    <ligand>
        <name>Mg(2+)</name>
        <dbReference type="ChEBI" id="CHEBI:18420"/>
    </ligand>
</feature>
<feature type="binding site" description="via carbamate group" evidence="1">
    <location>
        <position position="121"/>
    </location>
    <ligand>
        <name>Mg(2+)</name>
        <dbReference type="ChEBI" id="CHEBI:18420"/>
    </ligand>
</feature>
<feature type="binding site" evidence="1">
    <location>
        <position position="192"/>
    </location>
    <ligand>
        <name>[2Fe-2S] cluster</name>
        <dbReference type="ChEBI" id="CHEBI:190135"/>
    </ligand>
</feature>
<feature type="binding site" evidence="1">
    <location>
        <position position="442"/>
    </location>
    <ligand>
        <name>Mg(2+)</name>
        <dbReference type="ChEBI" id="CHEBI:18420"/>
    </ligand>
</feature>
<feature type="modified residue" description="N6-carboxylysine" evidence="1">
    <location>
        <position position="121"/>
    </location>
</feature>
<sequence>MRSDMIKKGFDKAPHRSLLKATGLKDEDFDKPFIAICNSFIEIIPGHKHLNEFGKLVKEAVRAAGMVPFEFNTIGVDDGIAMGHIGMRYSLPSREIIADSVETVVNAHWFDGMICIPNCDKITPGMMMAALRINIPTVFVSGGPMAAGKTSKGEVVDLSSVFEGVGAYQSGKISEEELKDIEDHGCPSCGSCSGMFTANSMNCLCEVLGLALPGNGSILAIDPRREELIKEAAEKLKVLIERDIKPRDIVTEEAIDDAFALDMAMGGSTNTVLHTLALAHEAGLDYDMSRIDAVSRRVPHLCKVSPASNWHMEDIDRAGGISAILKEMSRKEGVLHLDRITATGQTLRENIAHAEIKDKEVIHSLENPHSEEGGLRILKGNLAKDGAVIKSGATEVKRFEGPCVIFNSQDEALAGIMLGKVKKGDVVVIRYEGPRGGPGMPEMLAPTSAIAGMGLGADVALLTDGRFSGASRGISVGHISPEAAAGGTIALLEQGDIVCIDVEERLLEVRISDEELDKRKKEWKRPEPKVKTGWLGRYAQMVTSANTGAVLKVPNFD</sequence>
<proteinExistence type="inferred from homology"/>
<reference key="1">
    <citation type="submission" date="2008-10" db="EMBL/GenBank/DDBJ databases">
        <title>Genome sequence of Bacillus cereus AH187.</title>
        <authorList>
            <person name="Dodson R.J."/>
            <person name="Durkin A.S."/>
            <person name="Rosovitz M.J."/>
            <person name="Rasko D.A."/>
            <person name="Kolsto A.B."/>
            <person name="Okstad O.A."/>
            <person name="Ravel J."/>
            <person name="Sutton G."/>
        </authorList>
    </citation>
    <scope>NUCLEOTIDE SEQUENCE [LARGE SCALE GENOMIC DNA]</scope>
    <source>
        <strain>AH187</strain>
    </source>
</reference>
<accession>B7HMM7</accession>
<name>ILVD_BACC7</name>
<dbReference type="EC" id="4.2.1.9" evidence="1"/>
<dbReference type="EMBL" id="CP001177">
    <property type="protein sequence ID" value="ACJ82518.1"/>
    <property type="molecule type" value="Genomic_DNA"/>
</dbReference>
<dbReference type="SMR" id="B7HMM7"/>
<dbReference type="KEGG" id="bcr:BCAH187_A1969"/>
<dbReference type="HOGENOM" id="CLU_014271_4_2_9"/>
<dbReference type="UniPathway" id="UPA00047">
    <property type="reaction ID" value="UER00057"/>
</dbReference>
<dbReference type="UniPathway" id="UPA00049">
    <property type="reaction ID" value="UER00061"/>
</dbReference>
<dbReference type="Proteomes" id="UP000002214">
    <property type="component" value="Chromosome"/>
</dbReference>
<dbReference type="GO" id="GO:0005829">
    <property type="term" value="C:cytosol"/>
    <property type="evidence" value="ECO:0007669"/>
    <property type="project" value="TreeGrafter"/>
</dbReference>
<dbReference type="GO" id="GO:0051537">
    <property type="term" value="F:2 iron, 2 sulfur cluster binding"/>
    <property type="evidence" value="ECO:0007669"/>
    <property type="project" value="UniProtKB-UniRule"/>
</dbReference>
<dbReference type="GO" id="GO:0004160">
    <property type="term" value="F:dihydroxy-acid dehydratase activity"/>
    <property type="evidence" value="ECO:0007669"/>
    <property type="project" value="UniProtKB-UniRule"/>
</dbReference>
<dbReference type="GO" id="GO:0000287">
    <property type="term" value="F:magnesium ion binding"/>
    <property type="evidence" value="ECO:0007669"/>
    <property type="project" value="UniProtKB-UniRule"/>
</dbReference>
<dbReference type="GO" id="GO:0009097">
    <property type="term" value="P:isoleucine biosynthetic process"/>
    <property type="evidence" value="ECO:0007669"/>
    <property type="project" value="UniProtKB-UniRule"/>
</dbReference>
<dbReference type="GO" id="GO:0009099">
    <property type="term" value="P:L-valine biosynthetic process"/>
    <property type="evidence" value="ECO:0007669"/>
    <property type="project" value="UniProtKB-UniRule"/>
</dbReference>
<dbReference type="FunFam" id="3.50.30.80:FF:000001">
    <property type="entry name" value="Dihydroxy-acid dehydratase"/>
    <property type="match status" value="1"/>
</dbReference>
<dbReference type="Gene3D" id="3.50.30.80">
    <property type="entry name" value="IlvD/EDD C-terminal domain-like"/>
    <property type="match status" value="1"/>
</dbReference>
<dbReference type="HAMAP" id="MF_00012">
    <property type="entry name" value="IlvD"/>
    <property type="match status" value="1"/>
</dbReference>
<dbReference type="InterPro" id="IPR042096">
    <property type="entry name" value="Dihydro-acid_dehy_C"/>
</dbReference>
<dbReference type="InterPro" id="IPR004404">
    <property type="entry name" value="DihydroxyA_deHydtase"/>
</dbReference>
<dbReference type="InterPro" id="IPR020558">
    <property type="entry name" value="DiOHA_6PGluconate_deHydtase_CS"/>
</dbReference>
<dbReference type="InterPro" id="IPR056740">
    <property type="entry name" value="ILV_EDD_C"/>
</dbReference>
<dbReference type="InterPro" id="IPR000581">
    <property type="entry name" value="ILV_EDD_N"/>
</dbReference>
<dbReference type="InterPro" id="IPR037237">
    <property type="entry name" value="IlvD/EDD_N"/>
</dbReference>
<dbReference type="NCBIfam" id="TIGR00110">
    <property type="entry name" value="ilvD"/>
    <property type="match status" value="1"/>
</dbReference>
<dbReference type="NCBIfam" id="NF002068">
    <property type="entry name" value="PRK00911.1"/>
    <property type="match status" value="1"/>
</dbReference>
<dbReference type="PANTHER" id="PTHR43661">
    <property type="entry name" value="D-XYLONATE DEHYDRATASE"/>
    <property type="match status" value="1"/>
</dbReference>
<dbReference type="PANTHER" id="PTHR43661:SF3">
    <property type="entry name" value="D-XYLONATE DEHYDRATASE YAGF-RELATED"/>
    <property type="match status" value="1"/>
</dbReference>
<dbReference type="Pfam" id="PF24877">
    <property type="entry name" value="ILV_EDD_C"/>
    <property type="match status" value="1"/>
</dbReference>
<dbReference type="Pfam" id="PF00920">
    <property type="entry name" value="ILVD_EDD_N"/>
    <property type="match status" value="1"/>
</dbReference>
<dbReference type="SUPFAM" id="SSF143975">
    <property type="entry name" value="IlvD/EDD N-terminal domain-like"/>
    <property type="match status" value="1"/>
</dbReference>
<dbReference type="SUPFAM" id="SSF52016">
    <property type="entry name" value="LeuD/IlvD-like"/>
    <property type="match status" value="1"/>
</dbReference>
<dbReference type="PROSITE" id="PS00886">
    <property type="entry name" value="ILVD_EDD_1"/>
    <property type="match status" value="1"/>
</dbReference>
<dbReference type="PROSITE" id="PS00887">
    <property type="entry name" value="ILVD_EDD_2"/>
    <property type="match status" value="1"/>
</dbReference>
<gene>
    <name evidence="1" type="primary">ilvD</name>
    <name type="ordered locus">BCAH187_A1969</name>
</gene>
<comment type="function">
    <text evidence="1">Functions in the biosynthesis of branched-chain amino acids. Catalyzes the dehydration of (2R,3R)-2,3-dihydroxy-3-methylpentanoate (2,3-dihydroxy-3-methylvalerate) into 2-oxo-3-methylpentanoate (2-oxo-3-methylvalerate) and of (2R)-2,3-dihydroxy-3-methylbutanoate (2,3-dihydroxyisovalerate) into 2-oxo-3-methylbutanoate (2-oxoisovalerate), the penultimate precursor to L-isoleucine and L-valine, respectively.</text>
</comment>
<comment type="catalytic activity">
    <reaction evidence="1">
        <text>(2R)-2,3-dihydroxy-3-methylbutanoate = 3-methyl-2-oxobutanoate + H2O</text>
        <dbReference type="Rhea" id="RHEA:24809"/>
        <dbReference type="ChEBI" id="CHEBI:11851"/>
        <dbReference type="ChEBI" id="CHEBI:15377"/>
        <dbReference type="ChEBI" id="CHEBI:49072"/>
        <dbReference type="EC" id="4.2.1.9"/>
    </reaction>
    <physiologicalReaction direction="left-to-right" evidence="1">
        <dbReference type="Rhea" id="RHEA:24810"/>
    </physiologicalReaction>
</comment>
<comment type="catalytic activity">
    <reaction evidence="1">
        <text>(2R,3R)-2,3-dihydroxy-3-methylpentanoate = (S)-3-methyl-2-oxopentanoate + H2O</text>
        <dbReference type="Rhea" id="RHEA:27694"/>
        <dbReference type="ChEBI" id="CHEBI:15377"/>
        <dbReference type="ChEBI" id="CHEBI:35146"/>
        <dbReference type="ChEBI" id="CHEBI:49258"/>
        <dbReference type="EC" id="4.2.1.9"/>
    </reaction>
    <physiologicalReaction direction="left-to-right" evidence="1">
        <dbReference type="Rhea" id="RHEA:27695"/>
    </physiologicalReaction>
</comment>
<comment type="cofactor">
    <cofactor evidence="1">
        <name>[2Fe-2S] cluster</name>
        <dbReference type="ChEBI" id="CHEBI:190135"/>
    </cofactor>
    <text evidence="1">Binds 1 [2Fe-2S] cluster per subunit. This cluster acts as a Lewis acid cofactor.</text>
</comment>
<comment type="cofactor">
    <cofactor evidence="1">
        <name>Mg(2+)</name>
        <dbReference type="ChEBI" id="CHEBI:18420"/>
    </cofactor>
</comment>
<comment type="pathway">
    <text evidence="1">Amino-acid biosynthesis; L-isoleucine biosynthesis; L-isoleucine from 2-oxobutanoate: step 3/4.</text>
</comment>
<comment type="pathway">
    <text evidence="1">Amino-acid biosynthesis; L-valine biosynthesis; L-valine from pyruvate: step 3/4.</text>
</comment>
<comment type="subunit">
    <text evidence="1">Homodimer.</text>
</comment>
<comment type="similarity">
    <text evidence="1">Belongs to the IlvD/Edd family.</text>
</comment>
<evidence type="ECO:0000255" key="1">
    <source>
        <dbReference type="HAMAP-Rule" id="MF_00012"/>
    </source>
</evidence>
<organism>
    <name type="scientific">Bacillus cereus (strain AH187)</name>
    <dbReference type="NCBI Taxonomy" id="405534"/>
    <lineage>
        <taxon>Bacteria</taxon>
        <taxon>Bacillati</taxon>
        <taxon>Bacillota</taxon>
        <taxon>Bacilli</taxon>
        <taxon>Bacillales</taxon>
        <taxon>Bacillaceae</taxon>
        <taxon>Bacillus</taxon>
        <taxon>Bacillus cereus group</taxon>
    </lineage>
</organism>
<protein>
    <recommendedName>
        <fullName evidence="1">Dihydroxy-acid dehydratase</fullName>
        <shortName evidence="1">DAD</shortName>
        <ecNumber evidence="1">4.2.1.9</ecNumber>
    </recommendedName>
</protein>
<keyword id="KW-0001">2Fe-2S</keyword>
<keyword id="KW-0028">Amino-acid biosynthesis</keyword>
<keyword id="KW-0100">Branched-chain amino acid biosynthesis</keyword>
<keyword id="KW-0408">Iron</keyword>
<keyword id="KW-0411">Iron-sulfur</keyword>
<keyword id="KW-0456">Lyase</keyword>
<keyword id="KW-0460">Magnesium</keyword>
<keyword id="KW-0479">Metal-binding</keyword>